<keyword id="KW-0324">Glycolysis</keyword>
<keyword id="KW-0413">Isomerase</keyword>
<keyword id="KW-0464">Manganese</keyword>
<keyword id="KW-0479">Metal-binding</keyword>
<evidence type="ECO:0000255" key="1">
    <source>
        <dbReference type="HAMAP-Rule" id="MF_01038"/>
    </source>
</evidence>
<dbReference type="EC" id="5.4.2.12" evidence="1"/>
<dbReference type="EMBL" id="CP000926">
    <property type="protein sequence ID" value="ABZ00992.1"/>
    <property type="molecule type" value="Genomic_DNA"/>
</dbReference>
<dbReference type="RefSeq" id="WP_012274610.1">
    <property type="nucleotide sequence ID" value="NC_010322.1"/>
</dbReference>
<dbReference type="SMR" id="B0KN11"/>
<dbReference type="KEGG" id="ppg:PputGB1_5107"/>
<dbReference type="eggNOG" id="COG0696">
    <property type="taxonomic scope" value="Bacteria"/>
</dbReference>
<dbReference type="HOGENOM" id="CLU_026099_2_0_6"/>
<dbReference type="UniPathway" id="UPA00109">
    <property type="reaction ID" value="UER00186"/>
</dbReference>
<dbReference type="Proteomes" id="UP000002157">
    <property type="component" value="Chromosome"/>
</dbReference>
<dbReference type="GO" id="GO:0005829">
    <property type="term" value="C:cytosol"/>
    <property type="evidence" value="ECO:0007669"/>
    <property type="project" value="TreeGrafter"/>
</dbReference>
<dbReference type="GO" id="GO:0030145">
    <property type="term" value="F:manganese ion binding"/>
    <property type="evidence" value="ECO:0007669"/>
    <property type="project" value="UniProtKB-UniRule"/>
</dbReference>
<dbReference type="GO" id="GO:0004619">
    <property type="term" value="F:phosphoglycerate mutase activity"/>
    <property type="evidence" value="ECO:0007669"/>
    <property type="project" value="UniProtKB-EC"/>
</dbReference>
<dbReference type="GO" id="GO:0006007">
    <property type="term" value="P:glucose catabolic process"/>
    <property type="evidence" value="ECO:0007669"/>
    <property type="project" value="InterPro"/>
</dbReference>
<dbReference type="GO" id="GO:0006096">
    <property type="term" value="P:glycolytic process"/>
    <property type="evidence" value="ECO:0007669"/>
    <property type="project" value="UniProtKB-UniRule"/>
</dbReference>
<dbReference type="CDD" id="cd16010">
    <property type="entry name" value="iPGM"/>
    <property type="match status" value="1"/>
</dbReference>
<dbReference type="FunFam" id="3.40.1450.10:FF:000001">
    <property type="entry name" value="2,3-bisphosphoglycerate-independent phosphoglycerate mutase"/>
    <property type="match status" value="1"/>
</dbReference>
<dbReference type="FunFam" id="3.40.720.10:FF:000001">
    <property type="entry name" value="2,3-bisphosphoglycerate-independent phosphoglycerate mutase"/>
    <property type="match status" value="1"/>
</dbReference>
<dbReference type="Gene3D" id="3.40.720.10">
    <property type="entry name" value="Alkaline Phosphatase, subunit A"/>
    <property type="match status" value="1"/>
</dbReference>
<dbReference type="Gene3D" id="3.40.1450.10">
    <property type="entry name" value="BPG-independent phosphoglycerate mutase, domain B"/>
    <property type="match status" value="1"/>
</dbReference>
<dbReference type="HAMAP" id="MF_01038">
    <property type="entry name" value="GpmI"/>
    <property type="match status" value="1"/>
</dbReference>
<dbReference type="InterPro" id="IPR017850">
    <property type="entry name" value="Alkaline_phosphatase_core_sf"/>
</dbReference>
<dbReference type="InterPro" id="IPR011258">
    <property type="entry name" value="BPG-indep_PGM_N"/>
</dbReference>
<dbReference type="InterPro" id="IPR006124">
    <property type="entry name" value="Metalloenzyme"/>
</dbReference>
<dbReference type="InterPro" id="IPR036646">
    <property type="entry name" value="PGAM_B_sf"/>
</dbReference>
<dbReference type="InterPro" id="IPR005995">
    <property type="entry name" value="Pgm_bpd_ind"/>
</dbReference>
<dbReference type="NCBIfam" id="TIGR01307">
    <property type="entry name" value="pgm_bpd_ind"/>
    <property type="match status" value="1"/>
</dbReference>
<dbReference type="PANTHER" id="PTHR31637">
    <property type="entry name" value="2,3-BISPHOSPHOGLYCERATE-INDEPENDENT PHOSPHOGLYCERATE MUTASE"/>
    <property type="match status" value="1"/>
</dbReference>
<dbReference type="PANTHER" id="PTHR31637:SF0">
    <property type="entry name" value="2,3-BISPHOSPHOGLYCERATE-INDEPENDENT PHOSPHOGLYCERATE MUTASE"/>
    <property type="match status" value="1"/>
</dbReference>
<dbReference type="Pfam" id="PF06415">
    <property type="entry name" value="iPGM_N"/>
    <property type="match status" value="1"/>
</dbReference>
<dbReference type="Pfam" id="PF01676">
    <property type="entry name" value="Metalloenzyme"/>
    <property type="match status" value="1"/>
</dbReference>
<dbReference type="PIRSF" id="PIRSF001492">
    <property type="entry name" value="IPGAM"/>
    <property type="match status" value="1"/>
</dbReference>
<dbReference type="SUPFAM" id="SSF64158">
    <property type="entry name" value="2,3-Bisphosphoglycerate-independent phosphoglycerate mutase, substrate-binding domain"/>
    <property type="match status" value="1"/>
</dbReference>
<dbReference type="SUPFAM" id="SSF53649">
    <property type="entry name" value="Alkaline phosphatase-like"/>
    <property type="match status" value="1"/>
</dbReference>
<protein>
    <recommendedName>
        <fullName evidence="1">2,3-bisphosphoglycerate-independent phosphoglycerate mutase</fullName>
        <shortName evidence="1">BPG-independent PGAM</shortName>
        <shortName evidence="1">Phosphoglyceromutase</shortName>
        <shortName evidence="1">iPGM</shortName>
        <ecNumber evidence="1">5.4.2.12</ecNumber>
    </recommendedName>
</protein>
<comment type="function">
    <text evidence="1">Catalyzes the interconversion of 2-phosphoglycerate and 3-phosphoglycerate.</text>
</comment>
<comment type="catalytic activity">
    <reaction evidence="1">
        <text>(2R)-2-phosphoglycerate = (2R)-3-phosphoglycerate</text>
        <dbReference type="Rhea" id="RHEA:15901"/>
        <dbReference type="ChEBI" id="CHEBI:58272"/>
        <dbReference type="ChEBI" id="CHEBI:58289"/>
        <dbReference type="EC" id="5.4.2.12"/>
    </reaction>
</comment>
<comment type="cofactor">
    <cofactor evidence="1">
        <name>Mn(2+)</name>
        <dbReference type="ChEBI" id="CHEBI:29035"/>
    </cofactor>
    <text evidence="1">Binds 2 manganese ions per subunit.</text>
</comment>
<comment type="pathway">
    <text evidence="1">Carbohydrate degradation; glycolysis; pyruvate from D-glyceraldehyde 3-phosphate: step 3/5.</text>
</comment>
<comment type="subunit">
    <text evidence="1">Monomer.</text>
</comment>
<comment type="similarity">
    <text evidence="1">Belongs to the BPG-independent phosphoglycerate mutase family.</text>
</comment>
<organism>
    <name type="scientific">Pseudomonas putida (strain GB-1)</name>
    <dbReference type="NCBI Taxonomy" id="76869"/>
    <lineage>
        <taxon>Bacteria</taxon>
        <taxon>Pseudomonadati</taxon>
        <taxon>Pseudomonadota</taxon>
        <taxon>Gammaproteobacteria</taxon>
        <taxon>Pseudomonadales</taxon>
        <taxon>Pseudomonadaceae</taxon>
        <taxon>Pseudomonas</taxon>
    </lineage>
</organism>
<reference key="1">
    <citation type="submission" date="2008-01" db="EMBL/GenBank/DDBJ databases">
        <title>Complete sequence of Pseudomonas putida GB-1.</title>
        <authorList>
            <consortium name="US DOE Joint Genome Institute"/>
            <person name="Copeland A."/>
            <person name="Lucas S."/>
            <person name="Lapidus A."/>
            <person name="Barry K."/>
            <person name="Glavina del Rio T."/>
            <person name="Dalin E."/>
            <person name="Tice H."/>
            <person name="Pitluck S."/>
            <person name="Bruce D."/>
            <person name="Goodwin L."/>
            <person name="Chertkov O."/>
            <person name="Brettin T."/>
            <person name="Detter J.C."/>
            <person name="Han C."/>
            <person name="Kuske C.R."/>
            <person name="Schmutz J."/>
            <person name="Larimer F."/>
            <person name="Land M."/>
            <person name="Hauser L."/>
            <person name="Kyrpides N."/>
            <person name="Kim E."/>
            <person name="McCarthy J.K."/>
            <person name="Richardson P."/>
        </authorList>
    </citation>
    <scope>NUCLEOTIDE SEQUENCE [LARGE SCALE GENOMIC DNA]</scope>
    <source>
        <strain>GB-1</strain>
    </source>
</reference>
<name>GPMI_PSEPG</name>
<feature type="chain" id="PRO_1000084309" description="2,3-bisphosphoglycerate-independent phosphoglycerate mutase">
    <location>
        <begin position="1"/>
        <end position="511"/>
    </location>
</feature>
<feature type="active site" description="Phosphoserine intermediate" evidence="1">
    <location>
        <position position="64"/>
    </location>
</feature>
<feature type="binding site" evidence="1">
    <location>
        <position position="14"/>
    </location>
    <ligand>
        <name>Mn(2+)</name>
        <dbReference type="ChEBI" id="CHEBI:29035"/>
        <label>2</label>
    </ligand>
</feature>
<feature type="binding site" evidence="1">
    <location>
        <position position="64"/>
    </location>
    <ligand>
        <name>Mn(2+)</name>
        <dbReference type="ChEBI" id="CHEBI:29035"/>
        <label>2</label>
    </ligand>
</feature>
<feature type="binding site" evidence="1">
    <location>
        <position position="125"/>
    </location>
    <ligand>
        <name>substrate</name>
    </ligand>
</feature>
<feature type="binding site" evidence="1">
    <location>
        <begin position="155"/>
        <end position="156"/>
    </location>
    <ligand>
        <name>substrate</name>
    </ligand>
</feature>
<feature type="binding site" evidence="1">
    <location>
        <position position="187"/>
    </location>
    <ligand>
        <name>substrate</name>
    </ligand>
</feature>
<feature type="binding site" evidence="1">
    <location>
        <position position="193"/>
    </location>
    <ligand>
        <name>substrate</name>
    </ligand>
</feature>
<feature type="binding site" evidence="1">
    <location>
        <begin position="259"/>
        <end position="262"/>
    </location>
    <ligand>
        <name>substrate</name>
    </ligand>
</feature>
<feature type="binding site" evidence="1">
    <location>
        <position position="333"/>
    </location>
    <ligand>
        <name>substrate</name>
    </ligand>
</feature>
<feature type="binding site" evidence="1">
    <location>
        <position position="400"/>
    </location>
    <ligand>
        <name>Mn(2+)</name>
        <dbReference type="ChEBI" id="CHEBI:29035"/>
        <label>1</label>
    </ligand>
</feature>
<feature type="binding site" evidence="1">
    <location>
        <position position="404"/>
    </location>
    <ligand>
        <name>Mn(2+)</name>
        <dbReference type="ChEBI" id="CHEBI:29035"/>
        <label>1</label>
    </ligand>
</feature>
<feature type="binding site" evidence="1">
    <location>
        <position position="441"/>
    </location>
    <ligand>
        <name>Mn(2+)</name>
        <dbReference type="ChEBI" id="CHEBI:29035"/>
        <label>2</label>
    </ligand>
</feature>
<feature type="binding site" evidence="1">
    <location>
        <position position="442"/>
    </location>
    <ligand>
        <name>Mn(2+)</name>
        <dbReference type="ChEBI" id="CHEBI:29035"/>
        <label>2</label>
    </ligand>
</feature>
<feature type="binding site" evidence="1">
    <location>
        <position position="460"/>
    </location>
    <ligand>
        <name>Mn(2+)</name>
        <dbReference type="ChEBI" id="CHEBI:29035"/>
        <label>1</label>
    </ligand>
</feature>
<sequence length="511" mass="55233">MTSTPKPLVLIILDGFGHSEVPEHNAIFAANTPVYDRLRATLPHGLISGSGMDVGLPDGQMGNSEVGHMNLGAGRVVYQDFTRVTKAIRDGEFFKNPVLTGAVDKAASAGKAVHILGLLSDGGVHSHQDHLVAMAELAAQRGAEKIYLHAFLDGRDTPPRSAQSSIELLDATFAKLGKGRIASLIGRYYAMDRDNRWDRVSAAYNLIVDSAAEYTADTAQAGLEAAYARDESDEFVKATRIGEAVKVEDGDAVVFMNFRADRARELSRAFVEPDFTEFARARLPKMAAYIGLTQYSAKIPAPAAFAPSSLNNVLGEYLAKNGKTQLRIAETEKYAHVTFFFSGGREEPFEGEERILIPSPKVATYDLQPEMNAPQVTDRIVEAIEQQRFDVIVVNYANGDMVGHTGVFEAAVKAVEALDTCVGRIVDALEKVGGEALITADHGNVEQMEDECTGQAHTAHTTEPVPFIYVGKRNLKVRDGGVLADVAPTMLQLLGLEKPVEMTGTSILVDA</sequence>
<gene>
    <name evidence="1" type="primary">gpmI</name>
    <name type="ordered locus">PputGB1_5107</name>
</gene>
<accession>B0KN11</accession>
<proteinExistence type="inferred from homology"/>